<accession>Q9LVU1</accession>
<organism>
    <name type="scientific">Arabidopsis thaliana</name>
    <name type="common">Mouse-ear cress</name>
    <dbReference type="NCBI Taxonomy" id="3702"/>
    <lineage>
        <taxon>Eukaryota</taxon>
        <taxon>Viridiplantae</taxon>
        <taxon>Streptophyta</taxon>
        <taxon>Embryophyta</taxon>
        <taxon>Tracheophyta</taxon>
        <taxon>Spermatophyta</taxon>
        <taxon>Magnoliopsida</taxon>
        <taxon>eudicotyledons</taxon>
        <taxon>Gunneridae</taxon>
        <taxon>Pentapetalae</taxon>
        <taxon>rosids</taxon>
        <taxon>malvids</taxon>
        <taxon>Brassicales</taxon>
        <taxon>Brassicaceae</taxon>
        <taxon>Camelineae</taxon>
        <taxon>Arabidopsis</taxon>
    </lineage>
</organism>
<reference key="1">
    <citation type="journal article" date="2000" name="DNA Res.">
        <title>Structural analysis of Arabidopsis thaliana chromosome 5. X. Sequence features of the regions of 3,076,755 bp covered by sixty P1 and TAC clones.</title>
        <authorList>
            <person name="Sato S."/>
            <person name="Nakamura Y."/>
            <person name="Kaneko T."/>
            <person name="Katoh T."/>
            <person name="Asamizu E."/>
            <person name="Kotani H."/>
            <person name="Tabata S."/>
        </authorList>
    </citation>
    <scope>NUCLEOTIDE SEQUENCE [LARGE SCALE GENOMIC DNA]</scope>
    <source>
        <strain>cv. Columbia</strain>
    </source>
</reference>
<reference key="2">
    <citation type="journal article" date="2017" name="Plant J.">
        <title>Araport11: a complete reannotation of the Arabidopsis thaliana reference genome.</title>
        <authorList>
            <person name="Cheng C.Y."/>
            <person name="Krishnakumar V."/>
            <person name="Chan A.P."/>
            <person name="Thibaud-Nissen F."/>
            <person name="Schobel S."/>
            <person name="Town C.D."/>
        </authorList>
    </citation>
    <scope>GENOME REANNOTATION</scope>
    <source>
        <strain>cv. Columbia</strain>
    </source>
</reference>
<reference key="3">
    <citation type="journal article" date="2003" name="Science">
        <title>Empirical analysis of transcriptional activity in the Arabidopsis genome.</title>
        <authorList>
            <person name="Yamada K."/>
            <person name="Lim J."/>
            <person name="Dale J.M."/>
            <person name="Chen H."/>
            <person name="Shinn P."/>
            <person name="Palm C.J."/>
            <person name="Southwick A.M."/>
            <person name="Wu H.C."/>
            <person name="Kim C.J."/>
            <person name="Nguyen M."/>
            <person name="Pham P.K."/>
            <person name="Cheuk R.F."/>
            <person name="Karlin-Newmann G."/>
            <person name="Liu S.X."/>
            <person name="Lam B."/>
            <person name="Sakano H."/>
            <person name="Wu T."/>
            <person name="Yu G."/>
            <person name="Miranda M."/>
            <person name="Quach H.L."/>
            <person name="Tripp M."/>
            <person name="Chang C.H."/>
            <person name="Lee J.M."/>
            <person name="Toriumi M.J."/>
            <person name="Chan M.M."/>
            <person name="Tang C.C."/>
            <person name="Onodera C.S."/>
            <person name="Deng J.M."/>
            <person name="Akiyama K."/>
            <person name="Ansari Y."/>
            <person name="Arakawa T."/>
            <person name="Banh J."/>
            <person name="Banno F."/>
            <person name="Bowser L."/>
            <person name="Brooks S.Y."/>
            <person name="Carninci P."/>
            <person name="Chao Q."/>
            <person name="Choy N."/>
            <person name="Enju A."/>
            <person name="Goldsmith A.D."/>
            <person name="Gurjal M."/>
            <person name="Hansen N.F."/>
            <person name="Hayashizaki Y."/>
            <person name="Johnson-Hopson C."/>
            <person name="Hsuan V.W."/>
            <person name="Iida K."/>
            <person name="Karnes M."/>
            <person name="Khan S."/>
            <person name="Koesema E."/>
            <person name="Ishida J."/>
            <person name="Jiang P.X."/>
            <person name="Jones T."/>
            <person name="Kawai J."/>
            <person name="Kamiya A."/>
            <person name="Meyers C."/>
            <person name="Nakajima M."/>
            <person name="Narusaka M."/>
            <person name="Seki M."/>
            <person name="Sakurai T."/>
            <person name="Satou M."/>
            <person name="Tamse R."/>
            <person name="Vaysberg M."/>
            <person name="Wallender E.K."/>
            <person name="Wong C."/>
            <person name="Yamamura Y."/>
            <person name="Yuan S."/>
            <person name="Shinozaki K."/>
            <person name="Davis R.W."/>
            <person name="Theologis A."/>
            <person name="Ecker J.R."/>
        </authorList>
    </citation>
    <scope>NUCLEOTIDE SEQUENCE [LARGE SCALE MRNA]</scope>
    <source>
        <strain>cv. Columbia</strain>
    </source>
</reference>
<reference key="4">
    <citation type="submission" date="2002-03" db="EMBL/GenBank/DDBJ databases">
        <title>Full-length cDNA from Arabidopsis thaliana.</title>
        <authorList>
            <person name="Brover V.V."/>
            <person name="Troukhan M.E."/>
            <person name="Alexandrov N.A."/>
            <person name="Lu Y.-P."/>
            <person name="Flavell R.B."/>
            <person name="Feldmann K.A."/>
        </authorList>
    </citation>
    <scope>NUCLEOTIDE SEQUENCE [LARGE SCALE MRNA]</scope>
</reference>
<reference key="5">
    <citation type="journal article" date="2012" name="Mol. Cell. Proteomics">
        <title>Comparative large-scale characterisation of plant vs. mammal proteins reveals similar and idiosyncratic N-alpha acetylation features.</title>
        <authorList>
            <person name="Bienvenut W.V."/>
            <person name="Sumpton D."/>
            <person name="Martinez A."/>
            <person name="Lilla S."/>
            <person name="Espagne C."/>
            <person name="Meinnel T."/>
            <person name="Giglione C."/>
        </authorList>
    </citation>
    <scope>ACETYLATION [LARGE SCALE ANALYSIS] AT THR-2</scope>
    <scope>CLEAVAGE OF INITIATOR METHIONINE [LARGE SCALE ANALYSIS]</scope>
    <scope>IDENTIFICATION BY MASS SPECTROMETRY [LARGE SCALE ANALYSIS]</scope>
</reference>
<name>VAP21_ARATH</name>
<feature type="chain" id="PRO_0000425786" description="Vesicle-associated protein 2-1">
    <location>
        <begin position="1"/>
        <end position="220"/>
    </location>
</feature>
<feature type="initiator methionine" description="Removed; alternate" evidence="7">
    <location>
        <position position="1"/>
    </location>
</feature>
<feature type="chain" id="PRO_0000402173" description="Vesicle-associated protein 2-1, N-terminally processed">
    <location>
        <begin position="2"/>
        <end position="220"/>
    </location>
</feature>
<feature type="topological domain" description="Cytoplasmic" evidence="3">
    <location>
        <begin position="1"/>
        <end position="196"/>
    </location>
</feature>
<feature type="transmembrane region" description="Helical; Anchor for type IV membrane protein" evidence="3">
    <location>
        <begin position="197"/>
        <end position="217"/>
    </location>
</feature>
<feature type="domain" description="MSP" evidence="4">
    <location>
        <begin position="9"/>
        <end position="129"/>
    </location>
</feature>
<feature type="region of interest" description="Disordered" evidence="5">
    <location>
        <begin position="133"/>
        <end position="154"/>
    </location>
</feature>
<feature type="coiled-coil region" evidence="3">
    <location>
        <begin position="153"/>
        <end position="188"/>
    </location>
</feature>
<feature type="modified residue" description="N-acetylmethionine" evidence="2">
    <location>
        <position position="1"/>
    </location>
</feature>
<feature type="modified residue" description="N-acetylthreonine; in Vesicle-associated protein 2-1, N-terminally processed" evidence="7">
    <location>
        <position position="2"/>
    </location>
</feature>
<sequence length="220" mass="24667">MTGVGENQLISIQPDELKFLFELEKQSYCDLKVANKTENYVAFKVKTTSPKKYFVRPNTGVIQPWDSCIIRVTLQAQREYPPDMQCKDKFLLQSTIVPPHTDVDELPQDTFTKDSGKTLTECKLKVSYITPSTTQRSSESGATNGDGQSSETISTIQRLKEERDAAVKQTQQLQHELETVRRRRNQRNSGNGLSLKLAAMVGLIGLIIGFILKLTLASPT</sequence>
<keyword id="KW-0007">Acetylation</keyword>
<keyword id="KW-0175">Coiled coil</keyword>
<keyword id="KW-0256">Endoplasmic reticulum</keyword>
<keyword id="KW-0472">Membrane</keyword>
<keyword id="KW-1185">Reference proteome</keyword>
<keyword id="KW-0812">Transmembrane</keyword>
<keyword id="KW-1133">Transmembrane helix</keyword>
<protein>
    <recommendedName>
        <fullName>Vesicle-associated protein 2-1</fullName>
    </recommendedName>
    <alternativeName>
        <fullName>Plant VAP homolog 21</fullName>
        <shortName>AtPVA21</shortName>
    </alternativeName>
    <alternativeName>
        <fullName>VAMP-associated protein 2-1</fullName>
    </alternativeName>
    <component>
        <recommendedName>
            <fullName>Vesicle-associated protein 2-1, N-terminally processed</fullName>
        </recommendedName>
    </component>
</protein>
<gene>
    <name type="primary">PVA21</name>
    <name type="ordered locus">At5g47180</name>
    <name type="ORF">MQL5.3</name>
</gene>
<dbReference type="EMBL" id="AB018117">
    <property type="protein sequence ID" value="BAA97151.1"/>
    <property type="molecule type" value="Genomic_DNA"/>
</dbReference>
<dbReference type="EMBL" id="CP002688">
    <property type="protein sequence ID" value="AED95480.1"/>
    <property type="molecule type" value="Genomic_DNA"/>
</dbReference>
<dbReference type="EMBL" id="CP002688">
    <property type="protein sequence ID" value="AED95481.1"/>
    <property type="molecule type" value="Genomic_DNA"/>
</dbReference>
<dbReference type="EMBL" id="AY035160">
    <property type="protein sequence ID" value="AAK59664.1"/>
    <property type="molecule type" value="mRNA"/>
</dbReference>
<dbReference type="EMBL" id="AY063031">
    <property type="protein sequence ID" value="AAL34205.1"/>
    <property type="molecule type" value="mRNA"/>
</dbReference>
<dbReference type="EMBL" id="AY085274">
    <property type="protein sequence ID" value="AAM62506.1"/>
    <property type="molecule type" value="mRNA"/>
</dbReference>
<dbReference type="RefSeq" id="NP_199529.1">
    <property type="nucleotide sequence ID" value="NM_124089.5"/>
</dbReference>
<dbReference type="RefSeq" id="NP_851144.1">
    <property type="nucleotide sequence ID" value="NM_180813.4"/>
</dbReference>
<dbReference type="SMR" id="Q9LVU1"/>
<dbReference type="BioGRID" id="20012">
    <property type="interactions" value="76"/>
</dbReference>
<dbReference type="FunCoup" id="Q9LVU1">
    <property type="interactions" value="2631"/>
</dbReference>
<dbReference type="IntAct" id="Q9LVU1">
    <property type="interactions" value="76"/>
</dbReference>
<dbReference type="STRING" id="3702.Q9LVU1"/>
<dbReference type="GlyGen" id="Q9LVU1">
    <property type="glycosylation" value="1 site"/>
</dbReference>
<dbReference type="iPTMnet" id="Q9LVU1"/>
<dbReference type="PaxDb" id="3702-AT5G47180.2"/>
<dbReference type="ProteomicsDB" id="242311"/>
<dbReference type="EnsemblPlants" id="AT5G47180.1">
    <property type="protein sequence ID" value="AT5G47180.1"/>
    <property type="gene ID" value="AT5G47180"/>
</dbReference>
<dbReference type="EnsemblPlants" id="AT5G47180.2">
    <property type="protein sequence ID" value="AT5G47180.2"/>
    <property type="gene ID" value="AT5G47180"/>
</dbReference>
<dbReference type="GeneID" id="834764"/>
<dbReference type="Gramene" id="AT5G47180.1">
    <property type="protein sequence ID" value="AT5G47180.1"/>
    <property type="gene ID" value="AT5G47180"/>
</dbReference>
<dbReference type="Gramene" id="AT5G47180.2">
    <property type="protein sequence ID" value="AT5G47180.2"/>
    <property type="gene ID" value="AT5G47180"/>
</dbReference>
<dbReference type="KEGG" id="ath:AT5G47180"/>
<dbReference type="Araport" id="AT5G47180"/>
<dbReference type="TAIR" id="AT5G47180"/>
<dbReference type="eggNOG" id="KOG0439">
    <property type="taxonomic scope" value="Eukaryota"/>
</dbReference>
<dbReference type="HOGENOM" id="CLU_036554_1_2_1"/>
<dbReference type="InParanoid" id="Q9LVU1"/>
<dbReference type="OMA" id="AENAKPH"/>
<dbReference type="OrthoDB" id="264603at2759"/>
<dbReference type="PhylomeDB" id="Q9LVU1"/>
<dbReference type="PRO" id="PR:Q9LVU1"/>
<dbReference type="Proteomes" id="UP000006548">
    <property type="component" value="Chromosome 5"/>
</dbReference>
<dbReference type="ExpressionAtlas" id="Q9LVU1">
    <property type="expression patterns" value="baseline and differential"/>
</dbReference>
<dbReference type="GO" id="GO:0005783">
    <property type="term" value="C:endoplasmic reticulum"/>
    <property type="evidence" value="ECO:0007005"/>
    <property type="project" value="TAIR"/>
</dbReference>
<dbReference type="GO" id="GO:0005789">
    <property type="term" value="C:endoplasmic reticulum membrane"/>
    <property type="evidence" value="ECO:0007669"/>
    <property type="project" value="UniProtKB-SubCell"/>
</dbReference>
<dbReference type="GO" id="GO:0009536">
    <property type="term" value="C:plastid"/>
    <property type="evidence" value="ECO:0007005"/>
    <property type="project" value="TAIR"/>
</dbReference>
<dbReference type="FunFam" id="2.60.40.10:FF:000813">
    <property type="entry name" value="Vesicle-associated protein 1-1"/>
    <property type="match status" value="1"/>
</dbReference>
<dbReference type="Gene3D" id="2.60.40.10">
    <property type="entry name" value="Immunoglobulins"/>
    <property type="match status" value="1"/>
</dbReference>
<dbReference type="InterPro" id="IPR013783">
    <property type="entry name" value="Ig-like_fold"/>
</dbReference>
<dbReference type="InterPro" id="IPR000535">
    <property type="entry name" value="MSP_dom"/>
</dbReference>
<dbReference type="InterPro" id="IPR008962">
    <property type="entry name" value="PapD-like_sf"/>
</dbReference>
<dbReference type="InterPro" id="IPR016763">
    <property type="entry name" value="VAP"/>
</dbReference>
<dbReference type="PANTHER" id="PTHR10809">
    <property type="entry name" value="VESICLE-ASSOCIATED MEMBRANE PROTEIN-ASSOCIATED PROTEIN"/>
    <property type="match status" value="1"/>
</dbReference>
<dbReference type="PANTHER" id="PTHR10809:SF42">
    <property type="entry name" value="VESICLE-ASSOCIATED PROTEIN 2-1"/>
    <property type="match status" value="1"/>
</dbReference>
<dbReference type="Pfam" id="PF00635">
    <property type="entry name" value="Motile_Sperm"/>
    <property type="match status" value="1"/>
</dbReference>
<dbReference type="PIRSF" id="PIRSF019693">
    <property type="entry name" value="VAMP-associated"/>
    <property type="match status" value="1"/>
</dbReference>
<dbReference type="SUPFAM" id="SSF49354">
    <property type="entry name" value="PapD-like"/>
    <property type="match status" value="1"/>
</dbReference>
<dbReference type="PROSITE" id="PS50202">
    <property type="entry name" value="MSP"/>
    <property type="match status" value="1"/>
</dbReference>
<proteinExistence type="evidence at protein level"/>
<evidence type="ECO:0000250" key="1"/>
<evidence type="ECO:0000250" key="2">
    <source>
        <dbReference type="UniProtKB" id="B9DHD7"/>
    </source>
</evidence>
<evidence type="ECO:0000255" key="3"/>
<evidence type="ECO:0000255" key="4">
    <source>
        <dbReference type="PROSITE-ProRule" id="PRU00132"/>
    </source>
</evidence>
<evidence type="ECO:0000256" key="5">
    <source>
        <dbReference type="SAM" id="MobiDB-lite"/>
    </source>
</evidence>
<evidence type="ECO:0000305" key="6"/>
<evidence type="ECO:0007744" key="7">
    <source>
    </source>
</evidence>
<comment type="function">
    <text evidence="1">May play a role in vesicle trafficking.</text>
</comment>
<comment type="subcellular location">
    <subcellularLocation>
        <location evidence="1">Endoplasmic reticulum membrane</location>
        <topology evidence="1">Single-pass type IV membrane protein</topology>
        <orientation evidence="1">Cytoplasmic side</orientation>
    </subcellularLocation>
</comment>
<comment type="similarity">
    <text evidence="6">Belongs to the VAMP-associated protein (VAP) (TC 9.B.17) family.</text>
</comment>